<reference key="1">
    <citation type="journal article" date="2007" name="PLoS ONE">
        <title>Analysis of the neurotoxin complex genes in Clostridium botulinum A1-A4 and B1 strains: BoNT/A3, /Ba4 and /B1 clusters are located within plasmids.</title>
        <authorList>
            <person name="Smith T.J."/>
            <person name="Hill K.K."/>
            <person name="Foley B.T."/>
            <person name="Detter J.C."/>
            <person name="Munk A.C."/>
            <person name="Bruce D.C."/>
            <person name="Doggett N.A."/>
            <person name="Smith L.A."/>
            <person name="Marks J.D."/>
            <person name="Xie G."/>
            <person name="Brettin T.S."/>
        </authorList>
    </citation>
    <scope>NUCLEOTIDE SEQUENCE [LARGE SCALE GENOMIC DNA]</scope>
    <source>
        <strain>Okra / Type B1</strain>
    </source>
</reference>
<accession>B1IMN7</accession>
<evidence type="ECO:0000255" key="1">
    <source>
        <dbReference type="HAMAP-Rule" id="MF_00337"/>
    </source>
</evidence>
<keyword id="KW-0963">Cytoplasm</keyword>
<keyword id="KW-0269">Exonuclease</keyword>
<keyword id="KW-0378">Hydrolase</keyword>
<keyword id="KW-0540">Nuclease</keyword>
<gene>
    <name evidence="1" type="primary">xseB</name>
    <name type="ordered locus">CLD_2753</name>
</gene>
<protein>
    <recommendedName>
        <fullName evidence="1">Exodeoxyribonuclease 7 small subunit</fullName>
        <ecNumber evidence="1">3.1.11.6</ecNumber>
    </recommendedName>
    <alternativeName>
        <fullName evidence="1">Exodeoxyribonuclease VII small subunit</fullName>
        <shortName evidence="1">Exonuclease VII small subunit</shortName>
    </alternativeName>
</protein>
<organism>
    <name type="scientific">Clostridium botulinum (strain Okra / Type B1)</name>
    <dbReference type="NCBI Taxonomy" id="498213"/>
    <lineage>
        <taxon>Bacteria</taxon>
        <taxon>Bacillati</taxon>
        <taxon>Bacillota</taxon>
        <taxon>Clostridia</taxon>
        <taxon>Eubacteriales</taxon>
        <taxon>Clostridiaceae</taxon>
        <taxon>Clostridium</taxon>
    </lineage>
</organism>
<dbReference type="EC" id="3.1.11.6" evidence="1"/>
<dbReference type="EMBL" id="CP000939">
    <property type="protein sequence ID" value="ACA44515.1"/>
    <property type="molecule type" value="Genomic_DNA"/>
</dbReference>
<dbReference type="RefSeq" id="WP_003362517.1">
    <property type="nucleotide sequence ID" value="NC_010516.1"/>
</dbReference>
<dbReference type="SMR" id="B1IMN7"/>
<dbReference type="KEGG" id="cbb:CLD_2753"/>
<dbReference type="HOGENOM" id="CLU_145918_3_2_9"/>
<dbReference type="Proteomes" id="UP000008541">
    <property type="component" value="Chromosome"/>
</dbReference>
<dbReference type="GO" id="GO:0005829">
    <property type="term" value="C:cytosol"/>
    <property type="evidence" value="ECO:0007669"/>
    <property type="project" value="TreeGrafter"/>
</dbReference>
<dbReference type="GO" id="GO:0009318">
    <property type="term" value="C:exodeoxyribonuclease VII complex"/>
    <property type="evidence" value="ECO:0007669"/>
    <property type="project" value="InterPro"/>
</dbReference>
<dbReference type="GO" id="GO:0008855">
    <property type="term" value="F:exodeoxyribonuclease VII activity"/>
    <property type="evidence" value="ECO:0007669"/>
    <property type="project" value="UniProtKB-UniRule"/>
</dbReference>
<dbReference type="GO" id="GO:0006308">
    <property type="term" value="P:DNA catabolic process"/>
    <property type="evidence" value="ECO:0007669"/>
    <property type="project" value="UniProtKB-UniRule"/>
</dbReference>
<dbReference type="FunFam" id="1.10.287.1040:FF:000010">
    <property type="entry name" value="Exodeoxyribonuclease 7 small subunit"/>
    <property type="match status" value="1"/>
</dbReference>
<dbReference type="Gene3D" id="1.10.287.1040">
    <property type="entry name" value="Exonuclease VII, small subunit"/>
    <property type="match status" value="1"/>
</dbReference>
<dbReference type="HAMAP" id="MF_00337">
    <property type="entry name" value="Exonuc_7_S"/>
    <property type="match status" value="1"/>
</dbReference>
<dbReference type="InterPro" id="IPR003761">
    <property type="entry name" value="Exonuc_VII_S"/>
</dbReference>
<dbReference type="InterPro" id="IPR037004">
    <property type="entry name" value="Exonuc_VII_ssu_sf"/>
</dbReference>
<dbReference type="NCBIfam" id="NF002140">
    <property type="entry name" value="PRK00977.1-4"/>
    <property type="match status" value="1"/>
</dbReference>
<dbReference type="NCBIfam" id="TIGR01280">
    <property type="entry name" value="xseB"/>
    <property type="match status" value="1"/>
</dbReference>
<dbReference type="PANTHER" id="PTHR34137">
    <property type="entry name" value="EXODEOXYRIBONUCLEASE 7 SMALL SUBUNIT"/>
    <property type="match status" value="1"/>
</dbReference>
<dbReference type="PANTHER" id="PTHR34137:SF1">
    <property type="entry name" value="EXODEOXYRIBONUCLEASE 7 SMALL SUBUNIT"/>
    <property type="match status" value="1"/>
</dbReference>
<dbReference type="Pfam" id="PF02609">
    <property type="entry name" value="Exonuc_VII_S"/>
    <property type="match status" value="1"/>
</dbReference>
<dbReference type="PIRSF" id="PIRSF006488">
    <property type="entry name" value="Exonuc_VII_S"/>
    <property type="match status" value="1"/>
</dbReference>
<dbReference type="SUPFAM" id="SSF116842">
    <property type="entry name" value="XseB-like"/>
    <property type="match status" value="1"/>
</dbReference>
<comment type="function">
    <text evidence="1">Bidirectionally degrades single-stranded DNA into large acid-insoluble oligonucleotides, which are then degraded further into small acid-soluble oligonucleotides.</text>
</comment>
<comment type="catalytic activity">
    <reaction evidence="1">
        <text>Exonucleolytic cleavage in either 5'- to 3'- or 3'- to 5'-direction to yield nucleoside 5'-phosphates.</text>
        <dbReference type="EC" id="3.1.11.6"/>
    </reaction>
</comment>
<comment type="subunit">
    <text evidence="1">Heterooligomer composed of large and small subunits.</text>
</comment>
<comment type="subcellular location">
    <subcellularLocation>
        <location evidence="1">Cytoplasm</location>
    </subcellularLocation>
</comment>
<comment type="similarity">
    <text evidence="1">Belongs to the XseB family.</text>
</comment>
<feature type="chain" id="PRO_1000119915" description="Exodeoxyribonuclease 7 small subunit">
    <location>
        <begin position="1"/>
        <end position="71"/>
    </location>
</feature>
<proteinExistence type="inferred from homology"/>
<sequence length="71" mass="8265">MGRKKESFENMLEKLETIVDSMDNGEITLEDSMKSYEEGIKLCNKLYKVLKDAEGKIKILEDNKEEDFENS</sequence>
<name>EX7S_CLOBK</name>